<proteinExistence type="inferred from homology"/>
<accession>Q87ME9</accession>
<comment type="function">
    <text evidence="1">Involved in the biosynthesis of lipid A, a phosphorylated glycolipid that anchors the lipopolysaccharide to the outer membrane of the cell.</text>
</comment>
<comment type="catalytic activity">
    <reaction evidence="1">
        <text>a (3R)-hydroxyacyl-[ACP] + UDP-N-acetyl-alpha-D-glucosamine = a UDP-3-O-[(3R)-3-hydroxyacyl]-N-acetyl-alpha-D-glucosamine + holo-[ACP]</text>
        <dbReference type="Rhea" id="RHEA:67812"/>
        <dbReference type="Rhea" id="RHEA-COMP:9685"/>
        <dbReference type="Rhea" id="RHEA-COMP:9945"/>
        <dbReference type="ChEBI" id="CHEBI:57705"/>
        <dbReference type="ChEBI" id="CHEBI:64479"/>
        <dbReference type="ChEBI" id="CHEBI:78827"/>
        <dbReference type="ChEBI" id="CHEBI:173225"/>
        <dbReference type="EC" id="2.3.1.129"/>
    </reaction>
</comment>
<comment type="pathway">
    <text evidence="1">Glycolipid biosynthesis; lipid IV(A) biosynthesis; lipid IV(A) from (3R)-3-hydroxytetradecanoyl-[acyl-carrier-protein] and UDP-N-acetyl-alpha-D-glucosamine: step 1/6.</text>
</comment>
<comment type="subunit">
    <text evidence="1">Homotrimer.</text>
</comment>
<comment type="subcellular location">
    <subcellularLocation>
        <location evidence="1">Cytoplasm</location>
    </subcellularLocation>
</comment>
<comment type="similarity">
    <text evidence="1">Belongs to the transferase hexapeptide repeat family. LpxA subfamily.</text>
</comment>
<dbReference type="EC" id="2.3.1.129" evidence="1"/>
<dbReference type="EMBL" id="BA000031">
    <property type="protein sequence ID" value="BAC60569.1"/>
    <property type="molecule type" value="Genomic_DNA"/>
</dbReference>
<dbReference type="RefSeq" id="NP_798685.1">
    <property type="nucleotide sequence ID" value="NC_004603.1"/>
</dbReference>
<dbReference type="RefSeq" id="WP_005456706.1">
    <property type="nucleotide sequence ID" value="NC_004603.1"/>
</dbReference>
<dbReference type="SMR" id="Q87ME9"/>
<dbReference type="GeneID" id="1189819"/>
<dbReference type="KEGG" id="vpa:VP2306"/>
<dbReference type="PATRIC" id="fig|223926.6.peg.2208"/>
<dbReference type="eggNOG" id="COG1043">
    <property type="taxonomic scope" value="Bacteria"/>
</dbReference>
<dbReference type="HOGENOM" id="CLU_061249_0_1_6"/>
<dbReference type="UniPathway" id="UPA00359">
    <property type="reaction ID" value="UER00477"/>
</dbReference>
<dbReference type="Proteomes" id="UP000002493">
    <property type="component" value="Chromosome 1"/>
</dbReference>
<dbReference type="GO" id="GO:0005737">
    <property type="term" value="C:cytoplasm"/>
    <property type="evidence" value="ECO:0007669"/>
    <property type="project" value="UniProtKB-SubCell"/>
</dbReference>
<dbReference type="GO" id="GO:0016020">
    <property type="term" value="C:membrane"/>
    <property type="evidence" value="ECO:0007669"/>
    <property type="project" value="GOC"/>
</dbReference>
<dbReference type="GO" id="GO:0008780">
    <property type="term" value="F:acyl-[acyl-carrier-protein]-UDP-N-acetylglucosamine O-acyltransferase activity"/>
    <property type="evidence" value="ECO:0007669"/>
    <property type="project" value="UniProtKB-UniRule"/>
</dbReference>
<dbReference type="GO" id="GO:0009245">
    <property type="term" value="P:lipid A biosynthetic process"/>
    <property type="evidence" value="ECO:0007669"/>
    <property type="project" value="UniProtKB-UniRule"/>
</dbReference>
<dbReference type="CDD" id="cd03351">
    <property type="entry name" value="LbH_UDP-GlcNAc_AT"/>
    <property type="match status" value="1"/>
</dbReference>
<dbReference type="Gene3D" id="2.160.10.10">
    <property type="entry name" value="Hexapeptide repeat proteins"/>
    <property type="match status" value="1"/>
</dbReference>
<dbReference type="Gene3D" id="1.20.1180.10">
    <property type="entry name" value="Udp N-acetylglucosamine O-acyltransferase, C-terminal domain"/>
    <property type="match status" value="1"/>
</dbReference>
<dbReference type="HAMAP" id="MF_00387">
    <property type="entry name" value="LpxA"/>
    <property type="match status" value="1"/>
</dbReference>
<dbReference type="InterPro" id="IPR029098">
    <property type="entry name" value="Acetyltransf_C"/>
</dbReference>
<dbReference type="InterPro" id="IPR037157">
    <property type="entry name" value="Acetyltransf_C_sf"/>
</dbReference>
<dbReference type="InterPro" id="IPR001451">
    <property type="entry name" value="Hexapep"/>
</dbReference>
<dbReference type="InterPro" id="IPR010137">
    <property type="entry name" value="Lipid_A_LpxA"/>
</dbReference>
<dbReference type="InterPro" id="IPR011004">
    <property type="entry name" value="Trimer_LpxA-like_sf"/>
</dbReference>
<dbReference type="NCBIfam" id="TIGR01852">
    <property type="entry name" value="lipid_A_lpxA"/>
    <property type="match status" value="1"/>
</dbReference>
<dbReference type="NCBIfam" id="NF003657">
    <property type="entry name" value="PRK05289.1"/>
    <property type="match status" value="1"/>
</dbReference>
<dbReference type="PANTHER" id="PTHR43480">
    <property type="entry name" value="ACYL-[ACYL-CARRIER-PROTEIN]--UDP-N-ACETYLGLUCOSAMINE O-ACYLTRANSFERASE"/>
    <property type="match status" value="1"/>
</dbReference>
<dbReference type="PANTHER" id="PTHR43480:SF1">
    <property type="entry name" value="ACYL-[ACYL-CARRIER-PROTEIN]--UDP-N-ACETYLGLUCOSAMINE O-ACYLTRANSFERASE, MITOCHONDRIAL-RELATED"/>
    <property type="match status" value="1"/>
</dbReference>
<dbReference type="Pfam" id="PF13720">
    <property type="entry name" value="Acetyltransf_11"/>
    <property type="match status" value="1"/>
</dbReference>
<dbReference type="Pfam" id="PF00132">
    <property type="entry name" value="Hexapep"/>
    <property type="match status" value="2"/>
</dbReference>
<dbReference type="PIRSF" id="PIRSF000456">
    <property type="entry name" value="UDP-GlcNAc_acltr"/>
    <property type="match status" value="1"/>
</dbReference>
<dbReference type="SUPFAM" id="SSF51161">
    <property type="entry name" value="Trimeric LpxA-like enzymes"/>
    <property type="match status" value="1"/>
</dbReference>
<gene>
    <name evidence="1" type="primary">lpxA</name>
    <name type="ordered locus">VP2306</name>
</gene>
<feature type="chain" id="PRO_0000188072" description="Acyl-[acyl-carrier-protein]--UDP-N-acetylglucosamine O-acyltransferase">
    <location>
        <begin position="1"/>
        <end position="262"/>
    </location>
</feature>
<protein>
    <recommendedName>
        <fullName evidence="1">Acyl-[acyl-carrier-protein]--UDP-N-acetylglucosamine O-acyltransferase</fullName>
        <shortName evidence="1">UDP-N-acetylglucosamine acyltransferase</shortName>
        <ecNumber evidence="1">2.3.1.129</ecNumber>
    </recommendedName>
</protein>
<name>LPXA_VIBPA</name>
<organism>
    <name type="scientific">Vibrio parahaemolyticus serotype O3:K6 (strain RIMD 2210633)</name>
    <dbReference type="NCBI Taxonomy" id="223926"/>
    <lineage>
        <taxon>Bacteria</taxon>
        <taxon>Pseudomonadati</taxon>
        <taxon>Pseudomonadota</taxon>
        <taxon>Gammaproteobacteria</taxon>
        <taxon>Vibrionales</taxon>
        <taxon>Vibrionaceae</taxon>
        <taxon>Vibrio</taxon>
    </lineage>
</organism>
<reference key="1">
    <citation type="journal article" date="2003" name="Lancet">
        <title>Genome sequence of Vibrio parahaemolyticus: a pathogenic mechanism distinct from that of V. cholerae.</title>
        <authorList>
            <person name="Makino K."/>
            <person name="Oshima K."/>
            <person name="Kurokawa K."/>
            <person name="Yokoyama K."/>
            <person name="Uda T."/>
            <person name="Tagomori K."/>
            <person name="Iijima Y."/>
            <person name="Najima M."/>
            <person name="Nakano M."/>
            <person name="Yamashita A."/>
            <person name="Kubota Y."/>
            <person name="Kimura S."/>
            <person name="Yasunaga T."/>
            <person name="Honda T."/>
            <person name="Shinagawa H."/>
            <person name="Hattori M."/>
            <person name="Iida T."/>
        </authorList>
    </citation>
    <scope>NUCLEOTIDE SEQUENCE [LARGE SCALE GENOMIC DNA]</scope>
    <source>
        <strain>RIMD 2210633</strain>
    </source>
</reference>
<sequence>MIHETAKIHPAAVVEEGAKIGANVTVGPFTYITSTVEIGEGTEVMSHVVIKGHTKIGKDNRIFPHAVIGEENQDKKYGGEDTTVVIGDRNVIREAVQVHRGTVQDKATTVIGDDNLLCVNAHIAHDVVVGNHTHIGNNAILGGHVTVEDHAGVMALSAIHPFCTVGAYAYVGGCSAVVQDVPAYVLAQGNHATPFGLNLVGLKRNGFEKPEIRALQKAYKEIYRSGKTLEEVKPILAEMAQEWPAVKRFSDILETTERGIIR</sequence>
<keyword id="KW-0012">Acyltransferase</keyword>
<keyword id="KW-0963">Cytoplasm</keyword>
<keyword id="KW-0441">Lipid A biosynthesis</keyword>
<keyword id="KW-0444">Lipid biosynthesis</keyword>
<keyword id="KW-0443">Lipid metabolism</keyword>
<keyword id="KW-0677">Repeat</keyword>
<keyword id="KW-0808">Transferase</keyword>
<evidence type="ECO:0000255" key="1">
    <source>
        <dbReference type="HAMAP-Rule" id="MF_00387"/>
    </source>
</evidence>